<evidence type="ECO:0000255" key="1">
    <source>
        <dbReference type="HAMAP-Rule" id="MF_00562"/>
    </source>
</evidence>
<accession>Q97CM5</accession>
<comment type="function">
    <text evidence="1">D-aminoacyl-tRNA deacylase with broad substrate specificity. By recycling D-aminoacyl-tRNA to D-amino acids and free tRNA molecules, this enzyme counteracts the toxicity associated with the formation of D-aminoacyl-tRNA entities in vivo.</text>
</comment>
<comment type="catalytic activity">
    <reaction evidence="1">
        <text>a D-aminoacyl-tRNA + H2O = a tRNA + a D-alpha-amino acid + H(+)</text>
        <dbReference type="Rhea" id="RHEA:13953"/>
        <dbReference type="Rhea" id="RHEA-COMP:10123"/>
        <dbReference type="Rhea" id="RHEA-COMP:10124"/>
        <dbReference type="ChEBI" id="CHEBI:15377"/>
        <dbReference type="ChEBI" id="CHEBI:15378"/>
        <dbReference type="ChEBI" id="CHEBI:59871"/>
        <dbReference type="ChEBI" id="CHEBI:78442"/>
        <dbReference type="ChEBI" id="CHEBI:79333"/>
        <dbReference type="EC" id="3.1.1.96"/>
    </reaction>
</comment>
<comment type="catalytic activity">
    <reaction evidence="1">
        <text>glycyl-tRNA(Ala) + H2O = tRNA(Ala) + glycine + H(+)</text>
        <dbReference type="Rhea" id="RHEA:53744"/>
        <dbReference type="Rhea" id="RHEA-COMP:9657"/>
        <dbReference type="Rhea" id="RHEA-COMP:13640"/>
        <dbReference type="ChEBI" id="CHEBI:15377"/>
        <dbReference type="ChEBI" id="CHEBI:15378"/>
        <dbReference type="ChEBI" id="CHEBI:57305"/>
        <dbReference type="ChEBI" id="CHEBI:78442"/>
        <dbReference type="ChEBI" id="CHEBI:78522"/>
        <dbReference type="EC" id="3.1.1.96"/>
    </reaction>
</comment>
<comment type="cofactor">
    <cofactor evidence="1">
        <name>Zn(2+)</name>
        <dbReference type="ChEBI" id="CHEBI:29105"/>
    </cofactor>
    <text evidence="1">Binds 2 Zn(2+) ions per subunit.</text>
</comment>
<comment type="subunit">
    <text evidence="1">Monomer.</text>
</comment>
<comment type="similarity">
    <text evidence="1">Belongs to the DtdA deacylase family.</text>
</comment>
<proteinExistence type="inferred from homology"/>
<organism>
    <name type="scientific">Thermoplasma volcanium (strain ATCC 51530 / DSM 4299 / JCM 9571 / NBRC 15438 / GSS1)</name>
    <dbReference type="NCBI Taxonomy" id="273116"/>
    <lineage>
        <taxon>Archaea</taxon>
        <taxon>Methanobacteriati</taxon>
        <taxon>Thermoplasmatota</taxon>
        <taxon>Thermoplasmata</taxon>
        <taxon>Thermoplasmatales</taxon>
        <taxon>Thermoplasmataceae</taxon>
        <taxon>Thermoplasma</taxon>
    </lineage>
</organism>
<protein>
    <recommendedName>
        <fullName evidence="1">D-aminoacyl-tRNA deacylase</fullName>
        <ecNumber evidence="1">3.1.1.96</ecNumber>
    </recommendedName>
    <alternativeName>
        <fullName>D-tyrosyl-tRNA(Tyr) deacylase</fullName>
    </alternativeName>
</protein>
<sequence length="256" mass="28967">MKVLIASKSDPASMQMLSYLEDNYDIKENSGRRFVKDFEIFVIEDRHIFHDMNLGNNYEYAVVLSRHSSAADIKSLTAHPTGNFGPKADLGGRPKTINVSCPKYMSGTLRQMLESYSGTKFQVTFEATHHGPIFDLPNYYVEIGTTENEWTDDDAKKTAVDAVINPDAKDFPNFVAVGGGHYAPKILEYFRRNEINIGHIISKHDHDDLEEWQIKDAVEKTPSCKGFLVDRKGTRSRVRDMVKSISDDLGLELIMI</sequence>
<dbReference type="EC" id="3.1.1.96" evidence="1"/>
<dbReference type="EMBL" id="BA000011">
    <property type="protein sequence ID" value="BAB59218.1"/>
    <property type="molecule type" value="Genomic_DNA"/>
</dbReference>
<dbReference type="RefSeq" id="WP_010916333.1">
    <property type="nucleotide sequence ID" value="NC_002689.2"/>
</dbReference>
<dbReference type="SMR" id="Q97CM5"/>
<dbReference type="STRING" id="273116.gene:9380842"/>
<dbReference type="PaxDb" id="273116-14324290"/>
<dbReference type="GeneID" id="1441563"/>
<dbReference type="KEGG" id="tvo:TVG0076358"/>
<dbReference type="eggNOG" id="arCOG01616">
    <property type="taxonomic scope" value="Archaea"/>
</dbReference>
<dbReference type="HOGENOM" id="CLU_056464_1_0_2"/>
<dbReference type="OrthoDB" id="9863at2157"/>
<dbReference type="PhylomeDB" id="Q97CM5"/>
<dbReference type="Proteomes" id="UP000001017">
    <property type="component" value="Chromosome"/>
</dbReference>
<dbReference type="GO" id="GO:0051499">
    <property type="term" value="F:D-aminoacyl-tRNA deacylase activity"/>
    <property type="evidence" value="ECO:0007669"/>
    <property type="project" value="UniProtKB-UniRule"/>
</dbReference>
<dbReference type="GO" id="GO:0008270">
    <property type="term" value="F:zinc ion binding"/>
    <property type="evidence" value="ECO:0007669"/>
    <property type="project" value="UniProtKB-UniRule"/>
</dbReference>
<dbReference type="GO" id="GO:0019478">
    <property type="term" value="P:D-amino acid catabolic process"/>
    <property type="evidence" value="ECO:0007669"/>
    <property type="project" value="UniProtKB-UniRule"/>
</dbReference>
<dbReference type="Gene3D" id="3.40.50.10700">
    <property type="entry name" value="AF0625-like"/>
    <property type="match status" value="1"/>
</dbReference>
<dbReference type="Gene3D" id="3.40.630.50">
    <property type="entry name" value="AF0625-like"/>
    <property type="match status" value="1"/>
</dbReference>
<dbReference type="HAMAP" id="MF_00562">
    <property type="entry name" value="Deacylase_DtdA"/>
    <property type="match status" value="1"/>
</dbReference>
<dbReference type="InterPro" id="IPR018033">
    <property type="entry name" value="Deacylase_DtdA_archaea"/>
</dbReference>
<dbReference type="InterPro" id="IPR007508">
    <property type="entry name" value="DtdA"/>
</dbReference>
<dbReference type="NCBIfam" id="NF003072">
    <property type="entry name" value="PRK03995.1-4"/>
    <property type="match status" value="1"/>
</dbReference>
<dbReference type="PANTHER" id="PTHR34667">
    <property type="entry name" value="D-AMINOACYL-TRNA DEACYLASE"/>
    <property type="match status" value="1"/>
</dbReference>
<dbReference type="PANTHER" id="PTHR34667:SF1">
    <property type="entry name" value="D-AMINOACYL-TRNA DEACYLASE"/>
    <property type="match status" value="1"/>
</dbReference>
<dbReference type="Pfam" id="PF04414">
    <property type="entry name" value="tRNA_deacylase"/>
    <property type="match status" value="1"/>
</dbReference>
<dbReference type="PIRSF" id="PIRSF016210">
    <property type="entry name" value="UCP016210"/>
    <property type="match status" value="1"/>
</dbReference>
<dbReference type="SUPFAM" id="SSF142535">
    <property type="entry name" value="AF0625-like"/>
    <property type="match status" value="1"/>
</dbReference>
<name>DTDA_THEVO</name>
<gene>
    <name evidence="1" type="primary">dtdA</name>
    <name type="ordered locus">TV0076</name>
    <name type="ORF">TVG0076358</name>
</gene>
<keyword id="KW-0378">Hydrolase</keyword>
<keyword id="KW-0479">Metal-binding</keyword>
<keyword id="KW-0862">Zinc</keyword>
<feature type="chain" id="PRO_0000158977" description="D-aminoacyl-tRNA deacylase">
    <location>
        <begin position="1"/>
        <end position="256"/>
    </location>
</feature>
<reference key="1">
    <citation type="journal article" date="2000" name="Proc. Natl. Acad. Sci. U.S.A.">
        <title>Archaeal adaptation to higher temperatures revealed by genomic sequence of Thermoplasma volcanium.</title>
        <authorList>
            <person name="Kawashima T."/>
            <person name="Amano N."/>
            <person name="Koike H."/>
            <person name="Makino S."/>
            <person name="Higuchi S."/>
            <person name="Kawashima-Ohya Y."/>
            <person name="Watanabe K."/>
            <person name="Yamazaki M."/>
            <person name="Kanehori K."/>
            <person name="Kawamoto T."/>
            <person name="Nunoshiba T."/>
            <person name="Yamamoto Y."/>
            <person name="Aramaki H."/>
            <person name="Makino K."/>
            <person name="Suzuki M."/>
        </authorList>
    </citation>
    <scope>NUCLEOTIDE SEQUENCE [LARGE SCALE GENOMIC DNA]</scope>
    <source>
        <strain>ATCC 51530 / DSM 4299 / JCM 9571 / NBRC 15438 / GSS1</strain>
    </source>
</reference>